<name>CCME_METRJ</name>
<sequence>MTRKKRRLILIAACGSVLALAVGLILYAMSGSIVFFRSPTDIAKQAIAPGTRLRLGGLVKDGSLRRGPDQTVDFAVTDTNETVEVHYKGLLPDLFREGQGVVAEGVLEPGGQFRADTVLAKHDESYMPREVADALKAQGRWQEGGPNRGGPAPKPATAAADSTLGPRSER</sequence>
<protein>
    <recommendedName>
        <fullName evidence="1">Cytochrome c-type biogenesis protein CcmE</fullName>
    </recommendedName>
    <alternativeName>
        <fullName evidence="1">Cytochrome c maturation protein E</fullName>
    </alternativeName>
    <alternativeName>
        <fullName evidence="1">Heme chaperone CcmE</fullName>
    </alternativeName>
</protein>
<keyword id="KW-0997">Cell inner membrane</keyword>
<keyword id="KW-1003">Cell membrane</keyword>
<keyword id="KW-0201">Cytochrome c-type biogenesis</keyword>
<keyword id="KW-0349">Heme</keyword>
<keyword id="KW-0408">Iron</keyword>
<keyword id="KW-0472">Membrane</keyword>
<keyword id="KW-0479">Metal-binding</keyword>
<keyword id="KW-0735">Signal-anchor</keyword>
<keyword id="KW-0812">Transmembrane</keyword>
<keyword id="KW-1133">Transmembrane helix</keyword>
<accession>B1LU06</accession>
<organism>
    <name type="scientific">Methylobacterium radiotolerans (strain ATCC 27329 / DSM 1819 / JCM 2831 / NBRC 15690 / NCIMB 10815 / 0-1)</name>
    <dbReference type="NCBI Taxonomy" id="426355"/>
    <lineage>
        <taxon>Bacteria</taxon>
        <taxon>Pseudomonadati</taxon>
        <taxon>Pseudomonadota</taxon>
        <taxon>Alphaproteobacteria</taxon>
        <taxon>Hyphomicrobiales</taxon>
        <taxon>Methylobacteriaceae</taxon>
        <taxon>Methylobacterium</taxon>
    </lineage>
</organism>
<proteinExistence type="inferred from homology"/>
<comment type="function">
    <text evidence="1">Heme chaperone required for the biogenesis of c-type cytochromes. Transiently binds heme delivered by CcmC and transfers the heme to apo-cytochromes in a process facilitated by CcmF and CcmH.</text>
</comment>
<comment type="subcellular location">
    <subcellularLocation>
        <location evidence="1">Cell inner membrane</location>
        <topology evidence="1">Single-pass type II membrane protein</topology>
        <orientation evidence="1">Periplasmic side</orientation>
    </subcellularLocation>
</comment>
<comment type="similarity">
    <text evidence="1">Belongs to the CcmE/CycJ family.</text>
</comment>
<reference key="1">
    <citation type="submission" date="2008-03" db="EMBL/GenBank/DDBJ databases">
        <title>Complete sequence of chromosome of Methylobacterium radiotolerans JCM 2831.</title>
        <authorList>
            <consortium name="US DOE Joint Genome Institute"/>
            <person name="Copeland A."/>
            <person name="Lucas S."/>
            <person name="Lapidus A."/>
            <person name="Glavina del Rio T."/>
            <person name="Dalin E."/>
            <person name="Tice H."/>
            <person name="Bruce D."/>
            <person name="Goodwin L."/>
            <person name="Pitluck S."/>
            <person name="Kiss H."/>
            <person name="Brettin T."/>
            <person name="Detter J.C."/>
            <person name="Han C."/>
            <person name="Kuske C.R."/>
            <person name="Schmutz J."/>
            <person name="Larimer F."/>
            <person name="Land M."/>
            <person name="Hauser L."/>
            <person name="Kyrpides N."/>
            <person name="Mikhailova N."/>
            <person name="Marx C.J."/>
            <person name="Richardson P."/>
        </authorList>
    </citation>
    <scope>NUCLEOTIDE SEQUENCE [LARGE SCALE GENOMIC DNA]</scope>
    <source>
        <strain>ATCC 27329 / DSM 1819 / JCM 2831 / NBRC 15690 / NCIMB 10815 / 0-1</strain>
    </source>
</reference>
<feature type="chain" id="PRO_1000189035" description="Cytochrome c-type biogenesis protein CcmE">
    <location>
        <begin position="1"/>
        <end position="170"/>
    </location>
</feature>
<feature type="topological domain" description="Cytoplasmic" evidence="1">
    <location>
        <begin position="1"/>
        <end position="7"/>
    </location>
</feature>
<feature type="transmembrane region" description="Helical; Signal-anchor for type II membrane protein" evidence="1">
    <location>
        <begin position="8"/>
        <end position="28"/>
    </location>
</feature>
<feature type="topological domain" description="Periplasmic" evidence="1">
    <location>
        <begin position="29"/>
        <end position="170"/>
    </location>
</feature>
<feature type="region of interest" description="Disordered" evidence="2">
    <location>
        <begin position="132"/>
        <end position="170"/>
    </location>
</feature>
<feature type="binding site" description="covalent" evidence="1">
    <location>
        <position position="122"/>
    </location>
    <ligand>
        <name>heme</name>
        <dbReference type="ChEBI" id="CHEBI:30413"/>
    </ligand>
</feature>
<feature type="binding site" description="axial binding residue" evidence="1">
    <location>
        <position position="126"/>
    </location>
    <ligand>
        <name>heme</name>
        <dbReference type="ChEBI" id="CHEBI:30413"/>
    </ligand>
    <ligandPart>
        <name>Fe</name>
        <dbReference type="ChEBI" id="CHEBI:18248"/>
    </ligandPart>
</feature>
<evidence type="ECO:0000255" key="1">
    <source>
        <dbReference type="HAMAP-Rule" id="MF_01959"/>
    </source>
</evidence>
<evidence type="ECO:0000256" key="2">
    <source>
        <dbReference type="SAM" id="MobiDB-lite"/>
    </source>
</evidence>
<dbReference type="EMBL" id="CP001001">
    <property type="protein sequence ID" value="ACB26950.1"/>
    <property type="molecule type" value="Genomic_DNA"/>
</dbReference>
<dbReference type="RefSeq" id="WP_012321901.1">
    <property type="nucleotide sequence ID" value="NC_010505.1"/>
</dbReference>
<dbReference type="SMR" id="B1LU06"/>
<dbReference type="STRING" id="426355.Mrad2831_4992"/>
<dbReference type="GeneID" id="6141060"/>
<dbReference type="KEGG" id="mrd:Mrad2831_4992"/>
<dbReference type="eggNOG" id="COG2332">
    <property type="taxonomic scope" value="Bacteria"/>
</dbReference>
<dbReference type="HOGENOM" id="CLU_079503_1_1_5"/>
<dbReference type="OrthoDB" id="9793584at2"/>
<dbReference type="Proteomes" id="UP000006589">
    <property type="component" value="Chromosome"/>
</dbReference>
<dbReference type="GO" id="GO:0005886">
    <property type="term" value="C:plasma membrane"/>
    <property type="evidence" value="ECO:0007669"/>
    <property type="project" value="UniProtKB-SubCell"/>
</dbReference>
<dbReference type="GO" id="GO:0020037">
    <property type="term" value="F:heme binding"/>
    <property type="evidence" value="ECO:0007669"/>
    <property type="project" value="InterPro"/>
</dbReference>
<dbReference type="GO" id="GO:0046872">
    <property type="term" value="F:metal ion binding"/>
    <property type="evidence" value="ECO:0007669"/>
    <property type="project" value="UniProtKB-KW"/>
</dbReference>
<dbReference type="GO" id="GO:0017004">
    <property type="term" value="P:cytochrome complex assembly"/>
    <property type="evidence" value="ECO:0007669"/>
    <property type="project" value="UniProtKB-KW"/>
</dbReference>
<dbReference type="FunFam" id="2.40.50.140:FF:000104">
    <property type="entry name" value="Cytochrome c-type biogenesis protein CcmE"/>
    <property type="match status" value="1"/>
</dbReference>
<dbReference type="Gene3D" id="2.40.50.140">
    <property type="entry name" value="Nucleic acid-binding proteins"/>
    <property type="match status" value="1"/>
</dbReference>
<dbReference type="HAMAP" id="MF_01959">
    <property type="entry name" value="CcmE"/>
    <property type="match status" value="1"/>
</dbReference>
<dbReference type="InterPro" id="IPR004329">
    <property type="entry name" value="CcmE"/>
</dbReference>
<dbReference type="InterPro" id="IPR036127">
    <property type="entry name" value="CcmE-like_sf"/>
</dbReference>
<dbReference type="InterPro" id="IPR012340">
    <property type="entry name" value="NA-bd_OB-fold"/>
</dbReference>
<dbReference type="NCBIfam" id="NF009727">
    <property type="entry name" value="PRK13254.1-1"/>
    <property type="match status" value="1"/>
</dbReference>
<dbReference type="NCBIfam" id="NF009731">
    <property type="entry name" value="PRK13254.1-5"/>
    <property type="match status" value="1"/>
</dbReference>
<dbReference type="PANTHER" id="PTHR34128">
    <property type="entry name" value="CYTOCHROME C-TYPE BIOGENESIS PROTEIN CCME HOMOLOG, MITOCHONDRIAL"/>
    <property type="match status" value="1"/>
</dbReference>
<dbReference type="PANTHER" id="PTHR34128:SF2">
    <property type="entry name" value="CYTOCHROME C-TYPE BIOGENESIS PROTEIN CCME HOMOLOG, MITOCHONDRIAL"/>
    <property type="match status" value="1"/>
</dbReference>
<dbReference type="Pfam" id="PF03100">
    <property type="entry name" value="CcmE"/>
    <property type="match status" value="1"/>
</dbReference>
<dbReference type="SUPFAM" id="SSF82093">
    <property type="entry name" value="Heme chaperone CcmE"/>
    <property type="match status" value="1"/>
</dbReference>
<gene>
    <name evidence="1" type="primary">ccmE</name>
    <name evidence="1" type="synonym">cycJ</name>
    <name type="ordered locus">Mrad2831_4992</name>
</gene>